<sequence length="131" mass="15523">MVTLYTSPSCTSCRKARAWLEEHNIPFTERNIFSEPLSLDEIKEILRMTEDGTDEIISTRSKVFQKLDVNIDQLPMKNLFNLIQKNPGLLRRPIILDEKRLQVGYNEDEIRRFLPRTVRTFQLREAQRMVN</sequence>
<proteinExistence type="inferred from homology"/>
<name>SPX1_OCEIH</name>
<comment type="function">
    <text evidence="1">Global transcriptional regulator that plays a key role in stress response and exerts either positive or negative regulation of genes. Acts by interacting with the C-terminal domain of the alpha subunit of the RNA polymerase (RNAP). This interaction can enhance binding of RNAP to the promoter region of target genes and stimulate their transcription, or block interaction of RNAP with activator.</text>
</comment>
<comment type="subunit">
    <text evidence="1">Interacts with the C-terminal domain of the alpha subunit of the RNAP.</text>
</comment>
<comment type="subcellular location">
    <subcellularLocation>
        <location evidence="1">Cytoplasm</location>
    </subcellularLocation>
</comment>
<comment type="similarity">
    <text evidence="1">Belongs to the ArsC family. Spx subfamily.</text>
</comment>
<feature type="chain" id="PRO_0000162560" description="Global transcriptional regulator Spx 1">
    <location>
        <begin position="1"/>
        <end position="131"/>
    </location>
</feature>
<feature type="disulfide bond" description="Redox-active" evidence="1">
    <location>
        <begin position="10"/>
        <end position="13"/>
    </location>
</feature>
<organism>
    <name type="scientific">Oceanobacillus iheyensis (strain DSM 14371 / CIP 107618 / JCM 11309 / KCTC 3954 / HTE831)</name>
    <dbReference type="NCBI Taxonomy" id="221109"/>
    <lineage>
        <taxon>Bacteria</taxon>
        <taxon>Bacillati</taxon>
        <taxon>Bacillota</taxon>
        <taxon>Bacilli</taxon>
        <taxon>Bacillales</taxon>
        <taxon>Bacillaceae</taxon>
        <taxon>Oceanobacillus</taxon>
    </lineage>
</organism>
<dbReference type="EMBL" id="BA000028">
    <property type="protein sequence ID" value="BAC13169.1"/>
    <property type="molecule type" value="Genomic_DNA"/>
</dbReference>
<dbReference type="RefSeq" id="WP_011065612.1">
    <property type="nucleotide sequence ID" value="NC_004193.1"/>
</dbReference>
<dbReference type="SMR" id="Q8ERT7"/>
<dbReference type="STRING" id="221109.gene:10733452"/>
<dbReference type="KEGG" id="oih:OB1213"/>
<dbReference type="eggNOG" id="COG1393">
    <property type="taxonomic scope" value="Bacteria"/>
</dbReference>
<dbReference type="HOGENOM" id="CLU_116644_1_1_9"/>
<dbReference type="OrthoDB" id="9794155at2"/>
<dbReference type="PhylomeDB" id="Q8ERT7"/>
<dbReference type="Proteomes" id="UP000000822">
    <property type="component" value="Chromosome"/>
</dbReference>
<dbReference type="GO" id="GO:0005737">
    <property type="term" value="C:cytoplasm"/>
    <property type="evidence" value="ECO:0007669"/>
    <property type="project" value="UniProtKB-SubCell"/>
</dbReference>
<dbReference type="GO" id="GO:0045892">
    <property type="term" value="P:negative regulation of DNA-templated transcription"/>
    <property type="evidence" value="ECO:0007669"/>
    <property type="project" value="InterPro"/>
</dbReference>
<dbReference type="CDD" id="cd03032">
    <property type="entry name" value="ArsC_Spx"/>
    <property type="match status" value="1"/>
</dbReference>
<dbReference type="Gene3D" id="3.40.30.10">
    <property type="entry name" value="Glutaredoxin"/>
    <property type="match status" value="1"/>
</dbReference>
<dbReference type="HAMAP" id="MF_01132">
    <property type="entry name" value="Spx"/>
    <property type="match status" value="1"/>
</dbReference>
<dbReference type="InterPro" id="IPR006660">
    <property type="entry name" value="Arsenate_reductase-like"/>
</dbReference>
<dbReference type="InterPro" id="IPR023731">
    <property type="entry name" value="Spx"/>
</dbReference>
<dbReference type="InterPro" id="IPR036249">
    <property type="entry name" value="Thioredoxin-like_sf"/>
</dbReference>
<dbReference type="InterPro" id="IPR006504">
    <property type="entry name" value="Tscrpt_reg_Spx/MgsR"/>
</dbReference>
<dbReference type="NCBIfam" id="TIGR01617">
    <property type="entry name" value="arsC_related"/>
    <property type="match status" value="1"/>
</dbReference>
<dbReference type="NCBIfam" id="NF002459">
    <property type="entry name" value="PRK01655.1"/>
    <property type="match status" value="1"/>
</dbReference>
<dbReference type="NCBIfam" id="NF009210">
    <property type="entry name" value="PRK12559.1"/>
    <property type="match status" value="1"/>
</dbReference>
<dbReference type="PANTHER" id="PTHR30041">
    <property type="entry name" value="ARSENATE REDUCTASE"/>
    <property type="match status" value="1"/>
</dbReference>
<dbReference type="PANTHER" id="PTHR30041:SF7">
    <property type="entry name" value="GLOBAL TRANSCRIPTIONAL REGULATOR SPX"/>
    <property type="match status" value="1"/>
</dbReference>
<dbReference type="Pfam" id="PF03960">
    <property type="entry name" value="ArsC"/>
    <property type="match status" value="1"/>
</dbReference>
<dbReference type="SUPFAM" id="SSF52833">
    <property type="entry name" value="Thioredoxin-like"/>
    <property type="match status" value="1"/>
</dbReference>
<dbReference type="PROSITE" id="PS51353">
    <property type="entry name" value="ARSC"/>
    <property type="match status" value="1"/>
</dbReference>
<gene>
    <name evidence="1" type="primary">spx1</name>
    <name type="ordered locus">OB1213</name>
</gene>
<accession>Q8ERT7</accession>
<protein>
    <recommendedName>
        <fullName evidence="1">Global transcriptional regulator Spx 1</fullName>
    </recommendedName>
</protein>
<reference key="1">
    <citation type="journal article" date="2002" name="Nucleic Acids Res.">
        <title>Genome sequence of Oceanobacillus iheyensis isolated from the Iheya Ridge and its unexpected adaptive capabilities to extreme environments.</title>
        <authorList>
            <person name="Takami H."/>
            <person name="Takaki Y."/>
            <person name="Uchiyama I."/>
        </authorList>
    </citation>
    <scope>NUCLEOTIDE SEQUENCE [LARGE SCALE GENOMIC DNA]</scope>
    <source>
        <strain>DSM 14371 / CIP 107618 / JCM 11309 / KCTC 3954 / HTE831</strain>
    </source>
</reference>
<keyword id="KW-0963">Cytoplasm</keyword>
<keyword id="KW-1015">Disulfide bond</keyword>
<keyword id="KW-0676">Redox-active center</keyword>
<keyword id="KW-1185">Reference proteome</keyword>
<keyword id="KW-0804">Transcription</keyword>
<keyword id="KW-0805">Transcription regulation</keyword>
<evidence type="ECO:0000255" key="1">
    <source>
        <dbReference type="HAMAP-Rule" id="MF_01132"/>
    </source>
</evidence>